<reference key="1">
    <citation type="submission" date="2009-07" db="EMBL/GenBank/DDBJ databases">
        <title>Complete genome sequence of Rothia mucilaginosa DJ.</title>
        <authorList>
            <person name="Yamane K."/>
            <person name="Nambu T."/>
            <person name="Mashimo C."/>
            <person name="Sugimori C."/>
            <person name="Yamanaka T."/>
            <person name="Leung K."/>
            <person name="Fukushima H."/>
        </authorList>
    </citation>
    <scope>NUCLEOTIDE SEQUENCE [LARGE SCALE GENOMIC DNA]</scope>
    <source>
        <strain>DY-18</strain>
    </source>
</reference>
<organism>
    <name type="scientific">Rothia mucilaginosa (strain DY-18)</name>
    <name type="common">Stomatococcus mucilaginosus</name>
    <dbReference type="NCBI Taxonomy" id="680646"/>
    <lineage>
        <taxon>Bacteria</taxon>
        <taxon>Bacillati</taxon>
        <taxon>Actinomycetota</taxon>
        <taxon>Actinomycetes</taxon>
        <taxon>Micrococcales</taxon>
        <taxon>Micrococcaceae</taxon>
        <taxon>Rothia</taxon>
    </lineage>
</organism>
<sequence>MGGMSENTPRYASGVALVNVVISGEHAGTVLDAWFPAPSLTQTPDLSIADELEDLAVEHPARNARTEVRSASINLDEAPEDAVDAYLRLHLLSHTLVRPNELNLDGLFGTLANVAWTNHGPVLAAEFQKLAIGLRKLGHLSVSHIDKFPRLVDYVVPAGVRIGDGDRLRLGAHLASGTTVMHEGFVNFNAGTLGTSMVEGRISQGVVVGDGSDVGGGASTMGTLSGGGKKRVSIGERSLLGAESGIGIALGDDCVVEAGLYVTAGSRVSVLLPGQEARVVKAAELSGVSNLLFRRNSLSGAIEVLPRAKNTVELNEALHLN</sequence>
<accession>D2NS11</accession>
<comment type="function">
    <text evidence="1">Catalyzes the conversion of the cyclic tetrahydrodipicolinate (THDP) into the acyclic N-succinyl-L-2-amino-6-oxopimelate using succinyl-CoA.</text>
</comment>
<comment type="catalytic activity">
    <reaction evidence="1">
        <text>(S)-2,3,4,5-tetrahydrodipicolinate + succinyl-CoA + H2O = (S)-2-succinylamino-6-oxoheptanedioate + CoA</text>
        <dbReference type="Rhea" id="RHEA:17325"/>
        <dbReference type="ChEBI" id="CHEBI:15377"/>
        <dbReference type="ChEBI" id="CHEBI:15685"/>
        <dbReference type="ChEBI" id="CHEBI:16845"/>
        <dbReference type="ChEBI" id="CHEBI:57287"/>
        <dbReference type="ChEBI" id="CHEBI:57292"/>
        <dbReference type="EC" id="2.3.1.117"/>
    </reaction>
</comment>
<comment type="pathway">
    <text evidence="1">Amino-acid biosynthesis; L-lysine biosynthesis via DAP pathway; LL-2,6-diaminopimelate from (S)-tetrahydrodipicolinate (succinylase route): step 1/3.</text>
</comment>
<comment type="subunit">
    <text evidence="1">Homotrimer.</text>
</comment>
<comment type="subcellular location">
    <subcellularLocation>
        <location evidence="1">Cytoplasm</location>
    </subcellularLocation>
</comment>
<comment type="similarity">
    <text evidence="1">Belongs to the type 2 tetrahydrodipicolinate N-succinyltransferase family.</text>
</comment>
<dbReference type="EC" id="2.3.1.117" evidence="1"/>
<dbReference type="EMBL" id="AP011540">
    <property type="protein sequence ID" value="BAI64437.1"/>
    <property type="molecule type" value="Genomic_DNA"/>
</dbReference>
<dbReference type="RefSeq" id="WP_012903150.1">
    <property type="nucleotide sequence ID" value="NC_013715.1"/>
</dbReference>
<dbReference type="SMR" id="D2NS11"/>
<dbReference type="STRING" id="680646.RMDY18_06050"/>
<dbReference type="KEGG" id="rmu:RMDY18_06050"/>
<dbReference type="eggNOG" id="COG2171">
    <property type="taxonomic scope" value="Bacteria"/>
</dbReference>
<dbReference type="HOGENOM" id="CLU_057490_1_0_11"/>
<dbReference type="UniPathway" id="UPA00034">
    <property type="reaction ID" value="UER00019"/>
</dbReference>
<dbReference type="Proteomes" id="UP000001883">
    <property type="component" value="Chromosome"/>
</dbReference>
<dbReference type="GO" id="GO:0005737">
    <property type="term" value="C:cytoplasm"/>
    <property type="evidence" value="ECO:0007669"/>
    <property type="project" value="UniProtKB-SubCell"/>
</dbReference>
<dbReference type="GO" id="GO:0008666">
    <property type="term" value="F:2,3,4,5-tetrahydropyridine-2,6-dicarboxylate N-succinyltransferase activity"/>
    <property type="evidence" value="ECO:0007669"/>
    <property type="project" value="UniProtKB-UniRule"/>
</dbReference>
<dbReference type="GO" id="GO:0000287">
    <property type="term" value="F:magnesium ion binding"/>
    <property type="evidence" value="ECO:0007669"/>
    <property type="project" value="UniProtKB-UniRule"/>
</dbReference>
<dbReference type="GO" id="GO:0019877">
    <property type="term" value="P:diaminopimelate biosynthetic process"/>
    <property type="evidence" value="ECO:0007669"/>
    <property type="project" value="UniProtKB-UniRule"/>
</dbReference>
<dbReference type="GO" id="GO:0009089">
    <property type="term" value="P:lysine biosynthetic process via diaminopimelate"/>
    <property type="evidence" value="ECO:0007669"/>
    <property type="project" value="UniProtKB-UniRule"/>
</dbReference>
<dbReference type="CDD" id="cd04649">
    <property type="entry name" value="LbH_THP_succinylT_putative"/>
    <property type="match status" value="1"/>
</dbReference>
<dbReference type="Gene3D" id="3.30.70.2010">
    <property type="match status" value="1"/>
</dbReference>
<dbReference type="Gene3D" id="2.160.10.10">
    <property type="entry name" value="Hexapeptide repeat proteins"/>
    <property type="match status" value="1"/>
</dbReference>
<dbReference type="Gene3D" id="3.30.60.70">
    <property type="entry name" value="Trimeric LpxA-like enzymes"/>
    <property type="match status" value="1"/>
</dbReference>
<dbReference type="HAMAP" id="MF_02122">
    <property type="entry name" value="DapD_type2"/>
    <property type="match status" value="1"/>
</dbReference>
<dbReference type="InterPro" id="IPR019875">
    <property type="entry name" value="DapD_actinobacteria"/>
</dbReference>
<dbReference type="InterPro" id="IPR001451">
    <property type="entry name" value="Hexapep"/>
</dbReference>
<dbReference type="InterPro" id="IPR032784">
    <property type="entry name" value="THDPS_M"/>
</dbReference>
<dbReference type="InterPro" id="IPR038361">
    <property type="entry name" value="THDPS_M_sf"/>
</dbReference>
<dbReference type="InterPro" id="IPR011004">
    <property type="entry name" value="Trimer_LpxA-like_sf"/>
</dbReference>
<dbReference type="InterPro" id="IPR026586">
    <property type="entry name" value="Type2_DapD"/>
</dbReference>
<dbReference type="NCBIfam" id="TIGR03535">
    <property type="entry name" value="DapD_actino"/>
    <property type="match status" value="1"/>
</dbReference>
<dbReference type="Pfam" id="PF14602">
    <property type="entry name" value="Hexapep_2"/>
    <property type="match status" value="1"/>
</dbReference>
<dbReference type="Pfam" id="PF14789">
    <property type="entry name" value="THDPS_M"/>
    <property type="match status" value="1"/>
</dbReference>
<dbReference type="SUPFAM" id="SSF51161">
    <property type="entry name" value="Trimeric LpxA-like enzymes"/>
    <property type="match status" value="1"/>
</dbReference>
<proteinExistence type="inferred from homology"/>
<keyword id="KW-0012">Acyltransferase</keyword>
<keyword id="KW-0028">Amino-acid biosynthesis</keyword>
<keyword id="KW-0963">Cytoplasm</keyword>
<keyword id="KW-0220">Diaminopimelate biosynthesis</keyword>
<keyword id="KW-0457">Lysine biosynthesis</keyword>
<keyword id="KW-0460">Magnesium</keyword>
<keyword id="KW-0479">Metal-binding</keyword>
<keyword id="KW-1185">Reference proteome</keyword>
<keyword id="KW-0808">Transferase</keyword>
<gene>
    <name evidence="1" type="primary">dapD</name>
    <name type="ordered locus">RMDY18_06050</name>
</gene>
<feature type="chain" id="PRO_0000412267" description="2,3,4,5-tetrahydropyridine-2,6-dicarboxylate N-succinyltransferase">
    <location>
        <begin position="1"/>
        <end position="321"/>
    </location>
</feature>
<feature type="active site" description="Acyl-anhydride intermediate" evidence="1">
    <location>
        <position position="199"/>
    </location>
</feature>
<feature type="binding site" evidence="1">
    <location>
        <position position="166"/>
    </location>
    <ligand>
        <name>Mg(2+)</name>
        <dbReference type="ChEBI" id="CHEBI:18420"/>
        <label>1</label>
        <note>ligand shared between trimeric partners</note>
    </ligand>
</feature>
<feature type="binding site" evidence="1">
    <location>
        <position position="183"/>
    </location>
    <ligand>
        <name>Mg(2+)</name>
        <dbReference type="ChEBI" id="CHEBI:18420"/>
        <label>2</label>
        <note>ligand shared between trimeric partners</note>
    </ligand>
</feature>
<feature type="binding site" evidence="1">
    <location>
        <position position="201"/>
    </location>
    <ligand>
        <name>succinyl-CoA</name>
        <dbReference type="ChEBI" id="CHEBI:57292"/>
    </ligand>
</feature>
<feature type="binding site" evidence="1">
    <location>
        <position position="216"/>
    </location>
    <ligand>
        <name>succinyl-CoA</name>
        <dbReference type="ChEBI" id="CHEBI:57292"/>
    </ligand>
</feature>
<feature type="binding site" evidence="1">
    <location>
        <position position="219"/>
    </location>
    <ligand>
        <name>succinyl-CoA</name>
        <dbReference type="ChEBI" id="CHEBI:57292"/>
    </ligand>
</feature>
<feature type="binding site" evidence="1">
    <location>
        <position position="242"/>
    </location>
    <ligand>
        <name>succinyl-CoA</name>
        <dbReference type="ChEBI" id="CHEBI:57292"/>
    </ligand>
</feature>
<feature type="binding site" evidence="1">
    <location>
        <begin position="257"/>
        <end position="258"/>
    </location>
    <ligand>
        <name>succinyl-CoA</name>
        <dbReference type="ChEBI" id="CHEBI:57292"/>
    </ligand>
</feature>
<feature type="binding site" evidence="1">
    <location>
        <position position="265"/>
    </location>
    <ligand>
        <name>succinyl-CoA</name>
        <dbReference type="ChEBI" id="CHEBI:57292"/>
    </ligand>
</feature>
<feature type="binding site" evidence="1">
    <location>
        <position position="281"/>
    </location>
    <ligand>
        <name>succinyl-CoA</name>
        <dbReference type="ChEBI" id="CHEBI:57292"/>
    </ligand>
</feature>
<feature type="binding site" evidence="1">
    <location>
        <begin position="294"/>
        <end position="297"/>
    </location>
    <ligand>
        <name>succinyl-CoA</name>
        <dbReference type="ChEBI" id="CHEBI:57292"/>
    </ligand>
</feature>
<evidence type="ECO:0000255" key="1">
    <source>
        <dbReference type="HAMAP-Rule" id="MF_02122"/>
    </source>
</evidence>
<name>DAPD_ROTMD</name>
<protein>
    <recommendedName>
        <fullName evidence="1">2,3,4,5-tetrahydropyridine-2,6-dicarboxylate N-succinyltransferase</fullName>
        <ecNumber evidence="1">2.3.1.117</ecNumber>
    </recommendedName>
    <alternativeName>
        <fullName evidence="1">Tetrahydrodipicolinate N-succinyltransferase</fullName>
        <shortName evidence="1">THDP succinyltransferase</shortName>
        <shortName evidence="1">THP succinyltransferase</shortName>
    </alternativeName>
    <alternativeName>
        <fullName evidence="1">Tetrahydropicolinate succinylase</fullName>
    </alternativeName>
</protein>